<gene>
    <name type="primary">DARS1</name>
    <name type="synonym">DARS</name>
</gene>
<proteinExistence type="evidence at transcript level"/>
<dbReference type="EC" id="6.1.1.12" evidence="3"/>
<dbReference type="EMBL" id="CR859403">
    <property type="protein sequence ID" value="CAH91575.1"/>
    <property type="molecule type" value="mRNA"/>
</dbReference>
<dbReference type="RefSeq" id="NP_001125925.1">
    <property type="nucleotide sequence ID" value="NM_001132453.1"/>
</dbReference>
<dbReference type="BMRB" id="Q5R9I5"/>
<dbReference type="SMR" id="Q5R9I5"/>
<dbReference type="FunCoup" id="Q5R9I5">
    <property type="interactions" value="2075"/>
</dbReference>
<dbReference type="STRING" id="9601.ENSPPYP00000014308"/>
<dbReference type="GeneID" id="100172859"/>
<dbReference type="KEGG" id="pon:100172859"/>
<dbReference type="CTD" id="1615"/>
<dbReference type="eggNOG" id="KOG0556">
    <property type="taxonomic scope" value="Eukaryota"/>
</dbReference>
<dbReference type="InParanoid" id="Q5R9I5"/>
<dbReference type="OrthoDB" id="372395at2759"/>
<dbReference type="Proteomes" id="UP000001595">
    <property type="component" value="Unplaced"/>
</dbReference>
<dbReference type="GO" id="GO:0017101">
    <property type="term" value="C:aminoacyl-tRNA synthetase multienzyme complex"/>
    <property type="evidence" value="ECO:0000250"/>
    <property type="project" value="UniProtKB"/>
</dbReference>
<dbReference type="GO" id="GO:0005829">
    <property type="term" value="C:cytosol"/>
    <property type="evidence" value="ECO:0007669"/>
    <property type="project" value="TreeGrafter"/>
</dbReference>
<dbReference type="GO" id="GO:0004815">
    <property type="term" value="F:aspartate-tRNA ligase activity"/>
    <property type="evidence" value="ECO:0007669"/>
    <property type="project" value="UniProtKB-EC"/>
</dbReference>
<dbReference type="GO" id="GO:0005524">
    <property type="term" value="F:ATP binding"/>
    <property type="evidence" value="ECO:0007669"/>
    <property type="project" value="UniProtKB-KW"/>
</dbReference>
<dbReference type="GO" id="GO:0003723">
    <property type="term" value="F:RNA binding"/>
    <property type="evidence" value="ECO:0007669"/>
    <property type="project" value="TreeGrafter"/>
</dbReference>
<dbReference type="GO" id="GO:0006422">
    <property type="term" value="P:aspartyl-tRNA aminoacylation"/>
    <property type="evidence" value="ECO:0007669"/>
    <property type="project" value="InterPro"/>
</dbReference>
<dbReference type="CDD" id="cd04320">
    <property type="entry name" value="AspRS_cyto_N"/>
    <property type="match status" value="1"/>
</dbReference>
<dbReference type="CDD" id="cd00776">
    <property type="entry name" value="AsxRS_core"/>
    <property type="match status" value="1"/>
</dbReference>
<dbReference type="FunFam" id="2.40.50.140:FF:000144">
    <property type="entry name" value="Aspartate--tRNA ligase, cytoplasmic"/>
    <property type="match status" value="1"/>
</dbReference>
<dbReference type="FunFam" id="3.30.930.10:FF:000013">
    <property type="entry name" value="Aspartate--tRNA ligase, cytoplasmic"/>
    <property type="match status" value="1"/>
</dbReference>
<dbReference type="Gene3D" id="3.30.930.10">
    <property type="entry name" value="Bira Bifunctional Protein, Domain 2"/>
    <property type="match status" value="1"/>
</dbReference>
<dbReference type="Gene3D" id="2.40.50.140">
    <property type="entry name" value="Nucleic acid-binding proteins"/>
    <property type="match status" value="1"/>
</dbReference>
<dbReference type="HAMAP" id="MF_02075">
    <property type="entry name" value="Asp_tRNA_synth_type2"/>
    <property type="match status" value="1"/>
</dbReference>
<dbReference type="InterPro" id="IPR004364">
    <property type="entry name" value="Aa-tRNA-synt_II"/>
</dbReference>
<dbReference type="InterPro" id="IPR006195">
    <property type="entry name" value="aa-tRNA-synth_II"/>
</dbReference>
<dbReference type="InterPro" id="IPR045864">
    <property type="entry name" value="aa-tRNA-synth_II/BPL/LPL"/>
</dbReference>
<dbReference type="InterPro" id="IPR004523">
    <property type="entry name" value="Asp-tRNA_synthase_2"/>
</dbReference>
<dbReference type="InterPro" id="IPR002312">
    <property type="entry name" value="Asp/Asn-tRNA-synth_IIb"/>
</dbReference>
<dbReference type="InterPro" id="IPR012340">
    <property type="entry name" value="NA-bd_OB-fold"/>
</dbReference>
<dbReference type="InterPro" id="IPR004365">
    <property type="entry name" value="NA-bd_OB_tRNA"/>
</dbReference>
<dbReference type="NCBIfam" id="TIGR00458">
    <property type="entry name" value="aspS_nondisc"/>
    <property type="match status" value="1"/>
</dbReference>
<dbReference type="NCBIfam" id="NF003483">
    <property type="entry name" value="PRK05159.1"/>
    <property type="match status" value="1"/>
</dbReference>
<dbReference type="PANTHER" id="PTHR43450:SF1">
    <property type="entry name" value="ASPARTATE--TRNA LIGASE, CYTOPLASMIC"/>
    <property type="match status" value="1"/>
</dbReference>
<dbReference type="PANTHER" id="PTHR43450">
    <property type="entry name" value="ASPARTYL-TRNA SYNTHETASE"/>
    <property type="match status" value="1"/>
</dbReference>
<dbReference type="Pfam" id="PF00152">
    <property type="entry name" value="tRNA-synt_2"/>
    <property type="match status" value="1"/>
</dbReference>
<dbReference type="Pfam" id="PF01336">
    <property type="entry name" value="tRNA_anti-codon"/>
    <property type="match status" value="1"/>
</dbReference>
<dbReference type="PRINTS" id="PR01042">
    <property type="entry name" value="TRNASYNTHASP"/>
</dbReference>
<dbReference type="SUPFAM" id="SSF55681">
    <property type="entry name" value="Class II aaRS and biotin synthetases"/>
    <property type="match status" value="1"/>
</dbReference>
<dbReference type="SUPFAM" id="SSF50249">
    <property type="entry name" value="Nucleic acid-binding proteins"/>
    <property type="match status" value="1"/>
</dbReference>
<dbReference type="PROSITE" id="PS50862">
    <property type="entry name" value="AA_TRNA_LIGASE_II"/>
    <property type="match status" value="1"/>
</dbReference>
<keyword id="KW-0007">Acetylation</keyword>
<keyword id="KW-0030">Aminoacyl-tRNA synthetase</keyword>
<keyword id="KW-0067">ATP-binding</keyword>
<keyword id="KW-0963">Cytoplasm</keyword>
<keyword id="KW-0436">Ligase</keyword>
<keyword id="KW-0547">Nucleotide-binding</keyword>
<keyword id="KW-0597">Phosphoprotein</keyword>
<keyword id="KW-0648">Protein biosynthesis</keyword>
<keyword id="KW-1185">Reference proteome</keyword>
<evidence type="ECO:0000250" key="1"/>
<evidence type="ECO:0000250" key="2">
    <source>
        <dbReference type="UniProtKB" id="P14868"/>
    </source>
</evidence>
<evidence type="ECO:0000250" key="3">
    <source>
        <dbReference type="UniProtKB" id="P15178"/>
    </source>
</evidence>
<evidence type="ECO:0000255" key="4"/>
<evidence type="ECO:0000305" key="5"/>
<accession>Q5R9I5</accession>
<feature type="chain" id="PRO_0000250735" description="Aspartate--tRNA ligase, cytoplasmic">
    <location>
        <begin position="1"/>
        <end position="501"/>
    </location>
</feature>
<feature type="region of interest" description="Aspartate" evidence="1">
    <location>
        <begin position="251"/>
        <end position="254"/>
    </location>
</feature>
<feature type="region of interest" description="Binding site for the 3'-end of tRNA" evidence="4">
    <location>
        <begin position="411"/>
        <end position="415"/>
    </location>
</feature>
<feature type="binding site" evidence="1">
    <location>
        <position position="229"/>
    </location>
    <ligand>
        <name>L-aspartate</name>
        <dbReference type="ChEBI" id="CHEBI:29991"/>
    </ligand>
</feature>
<feature type="binding site" evidence="1">
    <location>
        <begin position="273"/>
        <end position="275"/>
    </location>
    <ligand>
        <name>ATP</name>
        <dbReference type="ChEBI" id="CHEBI:30616"/>
    </ligand>
</feature>
<feature type="binding site" evidence="1">
    <location>
        <position position="273"/>
    </location>
    <ligand>
        <name>L-aspartate</name>
        <dbReference type="ChEBI" id="CHEBI:29991"/>
    </ligand>
</feature>
<feature type="binding site" evidence="1">
    <location>
        <begin position="281"/>
        <end position="283"/>
    </location>
    <ligand>
        <name>ATP</name>
        <dbReference type="ChEBI" id="CHEBI:30616"/>
    </ligand>
</feature>
<feature type="binding site" evidence="1">
    <location>
        <position position="424"/>
    </location>
    <ligand>
        <name>ATP</name>
        <dbReference type="ChEBI" id="CHEBI:30616"/>
    </ligand>
</feature>
<feature type="binding site" evidence="1">
    <location>
        <position position="427"/>
    </location>
    <ligand>
        <name>L-aspartate</name>
        <dbReference type="ChEBI" id="CHEBI:29991"/>
    </ligand>
</feature>
<feature type="binding site" evidence="1">
    <location>
        <position position="431"/>
    </location>
    <ligand>
        <name>L-aspartate</name>
        <dbReference type="ChEBI" id="CHEBI:29991"/>
    </ligand>
</feature>
<feature type="binding site" evidence="1">
    <location>
        <begin position="472"/>
        <end position="475"/>
    </location>
    <ligand>
        <name>ATP</name>
        <dbReference type="ChEBI" id="CHEBI:30616"/>
    </ligand>
</feature>
<feature type="modified residue" description="Phosphothreonine" evidence="2">
    <location>
        <position position="52"/>
    </location>
</feature>
<feature type="modified residue" description="N6-acetyllysine" evidence="2">
    <location>
        <position position="74"/>
    </location>
</feature>
<feature type="modified residue" description="Phosphoserine" evidence="2">
    <location>
        <position position="249"/>
    </location>
</feature>
<feature type="modified residue" description="N6-acetyllysine" evidence="2">
    <location>
        <position position="374"/>
    </location>
</feature>
<feature type="modified residue" description="Phosphothreonine; by PKA" evidence="4">
    <location>
        <position position="500"/>
    </location>
</feature>
<sequence length="501" mass="57228">MPSASASRKSQEKPREIMDAAEDYAKERYGISSMIQSQEKSDRVLVRVRDLTIQKADEVVWVRARVHTSRAKGKQCFLVLRQQQFNVQALVAVGDHASKQMVKFAANINKESIVDVEGVVRKVNQKIESCTQQDVELHVQKIYVISLAEPRLPLQLDDAVRPEAEGEEEGRATVNQDTRLDNRVIDLRTSTSQAVFRLQSGICHLFRETLINKGFVEIQTPKIISAASEGGANVFTVSYFKNNAYLAQSPQLYKQMCICADFEKVFCIGPVFRAEDSNTHRHLTEFVGLDIEMAFNYHYHEVMEEIADTMVQIFKGLQERFQTEIQTVNKQFPCEPFKFLEPTLRLEYCEALAMLREAGVEMGDEDDLSTPNEKLLGHLIKEKYDTDFYILDKYPLAVRPFYTMPDPRNPKQSNSYDMFMRGEEILSGAQRIHDPQLLTERALHHGIDLEKIKAYIDSFRFGAPPHAGGGIGLERVTMLFLGLHNVRQTSMFPRDPKRLTP</sequence>
<protein>
    <recommendedName>
        <fullName>Aspartate--tRNA ligase, cytoplasmic</fullName>
        <ecNumber evidence="3">6.1.1.12</ecNumber>
    </recommendedName>
    <alternativeName>
        <fullName>Aspartyl-tRNA synthetase</fullName>
        <shortName>AspRS</shortName>
    </alternativeName>
</protein>
<organism>
    <name type="scientific">Pongo abelii</name>
    <name type="common">Sumatran orangutan</name>
    <name type="synonym">Pongo pygmaeus abelii</name>
    <dbReference type="NCBI Taxonomy" id="9601"/>
    <lineage>
        <taxon>Eukaryota</taxon>
        <taxon>Metazoa</taxon>
        <taxon>Chordata</taxon>
        <taxon>Craniata</taxon>
        <taxon>Vertebrata</taxon>
        <taxon>Euteleostomi</taxon>
        <taxon>Mammalia</taxon>
        <taxon>Eutheria</taxon>
        <taxon>Euarchontoglires</taxon>
        <taxon>Primates</taxon>
        <taxon>Haplorrhini</taxon>
        <taxon>Catarrhini</taxon>
        <taxon>Hominidae</taxon>
        <taxon>Pongo</taxon>
    </lineage>
</organism>
<reference key="1">
    <citation type="submission" date="2004-11" db="EMBL/GenBank/DDBJ databases">
        <authorList>
            <consortium name="The German cDNA consortium"/>
        </authorList>
    </citation>
    <scope>NUCLEOTIDE SEQUENCE [LARGE SCALE MRNA]</scope>
    <source>
        <tissue>Heart</tissue>
    </source>
</reference>
<comment type="function">
    <text evidence="3">Catalyzes the specific attachment of an amino acid to its cognate tRNA in a 2 step reaction: the amino acid (AA) is first activated by ATP to form AA-AMP and then transferred to the acceptor end of the tRNA.</text>
</comment>
<comment type="catalytic activity">
    <reaction evidence="3">
        <text>tRNA(Asp) + L-aspartate + ATP = L-aspartyl-tRNA(Asp) + AMP + diphosphate</text>
        <dbReference type="Rhea" id="RHEA:19649"/>
        <dbReference type="Rhea" id="RHEA-COMP:9660"/>
        <dbReference type="Rhea" id="RHEA-COMP:9678"/>
        <dbReference type="ChEBI" id="CHEBI:29991"/>
        <dbReference type="ChEBI" id="CHEBI:30616"/>
        <dbReference type="ChEBI" id="CHEBI:33019"/>
        <dbReference type="ChEBI" id="CHEBI:78442"/>
        <dbReference type="ChEBI" id="CHEBI:78516"/>
        <dbReference type="ChEBI" id="CHEBI:456215"/>
        <dbReference type="EC" id="6.1.1.12"/>
    </reaction>
</comment>
<comment type="subunit">
    <text evidence="2">Homodimer. Part of a multisubunit complex that groups tRNA ligases for Arg (RARS1), Asp (DARS1), Gln (QARS1), Ile (IARS1), Leu (LARS1), Lys (KARS1), Met (MARS1) the bifunctional ligase for Glu and Pro (EPRS1) and the auxiliary subunits AIMP1/p43, AIMP2/p38 and EEF1E1/p18.</text>
</comment>
<comment type="subcellular location">
    <subcellularLocation>
        <location evidence="1">Cytoplasm</location>
    </subcellularLocation>
</comment>
<comment type="similarity">
    <text evidence="5">Belongs to the class-II aminoacyl-tRNA synthetase family. Type 2 subfamily.</text>
</comment>
<name>SYDC_PONAB</name>